<dbReference type="EC" id="6.1.1.7" evidence="1"/>
<dbReference type="EMBL" id="CP001365">
    <property type="protein sequence ID" value="ACM56321.1"/>
    <property type="molecule type" value="Genomic_DNA"/>
</dbReference>
<dbReference type="RefSeq" id="WP_012659951.1">
    <property type="nucleotide sequence ID" value="NC_012029.1"/>
</dbReference>
<dbReference type="SMR" id="B9LUG4"/>
<dbReference type="GeneID" id="7400192"/>
<dbReference type="KEGG" id="hla:Hlac_0719"/>
<dbReference type="eggNOG" id="arCOG01255">
    <property type="taxonomic scope" value="Archaea"/>
</dbReference>
<dbReference type="HOGENOM" id="CLU_004485_4_0_2"/>
<dbReference type="Proteomes" id="UP000000740">
    <property type="component" value="Chromosome 1"/>
</dbReference>
<dbReference type="GO" id="GO:0005737">
    <property type="term" value="C:cytoplasm"/>
    <property type="evidence" value="ECO:0007669"/>
    <property type="project" value="UniProtKB-SubCell"/>
</dbReference>
<dbReference type="GO" id="GO:0004813">
    <property type="term" value="F:alanine-tRNA ligase activity"/>
    <property type="evidence" value="ECO:0007669"/>
    <property type="project" value="UniProtKB-UniRule"/>
</dbReference>
<dbReference type="GO" id="GO:0002161">
    <property type="term" value="F:aminoacyl-tRNA deacylase activity"/>
    <property type="evidence" value="ECO:0007669"/>
    <property type="project" value="UniProtKB-ARBA"/>
</dbReference>
<dbReference type="GO" id="GO:0005524">
    <property type="term" value="F:ATP binding"/>
    <property type="evidence" value="ECO:0007669"/>
    <property type="project" value="UniProtKB-UniRule"/>
</dbReference>
<dbReference type="GO" id="GO:0000049">
    <property type="term" value="F:tRNA binding"/>
    <property type="evidence" value="ECO:0007669"/>
    <property type="project" value="UniProtKB-KW"/>
</dbReference>
<dbReference type="GO" id="GO:0008270">
    <property type="term" value="F:zinc ion binding"/>
    <property type="evidence" value="ECO:0007669"/>
    <property type="project" value="UniProtKB-UniRule"/>
</dbReference>
<dbReference type="GO" id="GO:0006419">
    <property type="term" value="P:alanyl-tRNA aminoacylation"/>
    <property type="evidence" value="ECO:0007669"/>
    <property type="project" value="UniProtKB-UniRule"/>
</dbReference>
<dbReference type="FunFam" id="3.10.310.40:FF:000001">
    <property type="entry name" value="Alanine--tRNA ligase"/>
    <property type="match status" value="1"/>
</dbReference>
<dbReference type="FunFam" id="3.30.54.20:FF:000005">
    <property type="entry name" value="Alanine--tRNA ligase"/>
    <property type="match status" value="1"/>
</dbReference>
<dbReference type="FunFam" id="3.30.930.10:FF:000056">
    <property type="entry name" value="Alanine--tRNA ligase"/>
    <property type="match status" value="1"/>
</dbReference>
<dbReference type="FunFam" id="3.30.980.10:FF:000004">
    <property type="entry name" value="Alanine--tRNA ligase, cytoplasmic"/>
    <property type="match status" value="1"/>
</dbReference>
<dbReference type="Gene3D" id="2.40.30.130">
    <property type="match status" value="1"/>
</dbReference>
<dbReference type="Gene3D" id="3.10.310.40">
    <property type="match status" value="1"/>
</dbReference>
<dbReference type="Gene3D" id="3.30.54.20">
    <property type="match status" value="1"/>
</dbReference>
<dbReference type="Gene3D" id="6.10.250.550">
    <property type="match status" value="1"/>
</dbReference>
<dbReference type="Gene3D" id="3.30.930.10">
    <property type="entry name" value="Bira Bifunctional Protein, Domain 2"/>
    <property type="match status" value="1"/>
</dbReference>
<dbReference type="Gene3D" id="3.30.980.10">
    <property type="entry name" value="Threonyl-trna Synthetase, Chain A, domain 2"/>
    <property type="match status" value="1"/>
</dbReference>
<dbReference type="HAMAP" id="MF_00036_A">
    <property type="entry name" value="Ala_tRNA_synth_A"/>
    <property type="match status" value="1"/>
</dbReference>
<dbReference type="InterPro" id="IPR045864">
    <property type="entry name" value="aa-tRNA-synth_II/BPL/LPL"/>
</dbReference>
<dbReference type="InterPro" id="IPR002318">
    <property type="entry name" value="Ala-tRNA-lgiase_IIc"/>
</dbReference>
<dbReference type="InterPro" id="IPR018162">
    <property type="entry name" value="Ala-tRNA-ligase_IIc_anticod-bd"/>
</dbReference>
<dbReference type="InterPro" id="IPR018165">
    <property type="entry name" value="Ala-tRNA-synth_IIc_core"/>
</dbReference>
<dbReference type="InterPro" id="IPR018164">
    <property type="entry name" value="Ala-tRNA-synth_IIc_N"/>
</dbReference>
<dbReference type="InterPro" id="IPR022429">
    <property type="entry name" value="Ala-tRNA_lgiase_arc"/>
</dbReference>
<dbReference type="InterPro" id="IPR050058">
    <property type="entry name" value="Ala-tRNA_ligase"/>
</dbReference>
<dbReference type="InterPro" id="IPR003156">
    <property type="entry name" value="DHHA1_dom"/>
</dbReference>
<dbReference type="InterPro" id="IPR018163">
    <property type="entry name" value="Thr/Ala-tRNA-synth_IIc_edit"/>
</dbReference>
<dbReference type="InterPro" id="IPR009000">
    <property type="entry name" value="Transl_B-barrel_sf"/>
</dbReference>
<dbReference type="InterPro" id="IPR012947">
    <property type="entry name" value="tRNA_SAD"/>
</dbReference>
<dbReference type="NCBIfam" id="TIGR03683">
    <property type="entry name" value="A-tRNA_syn_arch"/>
    <property type="match status" value="1"/>
</dbReference>
<dbReference type="NCBIfam" id="TIGR00344">
    <property type="entry name" value="alaS"/>
    <property type="match status" value="1"/>
</dbReference>
<dbReference type="PANTHER" id="PTHR11777:SF9">
    <property type="entry name" value="ALANINE--TRNA LIGASE, CYTOPLASMIC"/>
    <property type="match status" value="1"/>
</dbReference>
<dbReference type="PANTHER" id="PTHR11777">
    <property type="entry name" value="ALANYL-TRNA SYNTHETASE"/>
    <property type="match status" value="1"/>
</dbReference>
<dbReference type="Pfam" id="PF02272">
    <property type="entry name" value="DHHA1"/>
    <property type="match status" value="1"/>
</dbReference>
<dbReference type="Pfam" id="PF01411">
    <property type="entry name" value="tRNA-synt_2c"/>
    <property type="match status" value="1"/>
</dbReference>
<dbReference type="Pfam" id="PF07973">
    <property type="entry name" value="tRNA_SAD"/>
    <property type="match status" value="1"/>
</dbReference>
<dbReference type="PRINTS" id="PR00980">
    <property type="entry name" value="TRNASYNTHALA"/>
</dbReference>
<dbReference type="SMART" id="SM00863">
    <property type="entry name" value="tRNA_SAD"/>
    <property type="match status" value="1"/>
</dbReference>
<dbReference type="SUPFAM" id="SSF55681">
    <property type="entry name" value="Class II aaRS and biotin synthetases"/>
    <property type="match status" value="1"/>
</dbReference>
<dbReference type="SUPFAM" id="SSF101353">
    <property type="entry name" value="Putative anticodon-binding domain of alanyl-tRNA synthetase (AlaRS)"/>
    <property type="match status" value="1"/>
</dbReference>
<dbReference type="SUPFAM" id="SSF55186">
    <property type="entry name" value="ThrRS/AlaRS common domain"/>
    <property type="match status" value="1"/>
</dbReference>
<dbReference type="SUPFAM" id="SSF50447">
    <property type="entry name" value="Translation proteins"/>
    <property type="match status" value="1"/>
</dbReference>
<dbReference type="PROSITE" id="PS50860">
    <property type="entry name" value="AA_TRNA_LIGASE_II_ALA"/>
    <property type="match status" value="1"/>
</dbReference>
<proteinExistence type="inferred from homology"/>
<evidence type="ECO:0000255" key="1">
    <source>
        <dbReference type="HAMAP-Rule" id="MF_00036"/>
    </source>
</evidence>
<evidence type="ECO:0000256" key="2">
    <source>
        <dbReference type="SAM" id="MobiDB-lite"/>
    </source>
</evidence>
<comment type="function">
    <text evidence="1">Catalyzes the attachment of alanine to tRNA(Ala) in a two-step reaction: alanine is first activated by ATP to form Ala-AMP and then transferred to the acceptor end of tRNA(Ala). Also edits incorrectly charged Ser-tRNA(Ala) and Gly-tRNA(Ala) via its editing domain.</text>
</comment>
<comment type="catalytic activity">
    <reaction evidence="1">
        <text>tRNA(Ala) + L-alanine + ATP = L-alanyl-tRNA(Ala) + AMP + diphosphate</text>
        <dbReference type="Rhea" id="RHEA:12540"/>
        <dbReference type="Rhea" id="RHEA-COMP:9657"/>
        <dbReference type="Rhea" id="RHEA-COMP:9923"/>
        <dbReference type="ChEBI" id="CHEBI:30616"/>
        <dbReference type="ChEBI" id="CHEBI:33019"/>
        <dbReference type="ChEBI" id="CHEBI:57972"/>
        <dbReference type="ChEBI" id="CHEBI:78442"/>
        <dbReference type="ChEBI" id="CHEBI:78497"/>
        <dbReference type="ChEBI" id="CHEBI:456215"/>
        <dbReference type="EC" id="6.1.1.7"/>
    </reaction>
</comment>
<comment type="cofactor">
    <cofactor evidence="1">
        <name>Zn(2+)</name>
        <dbReference type="ChEBI" id="CHEBI:29105"/>
    </cofactor>
    <text evidence="1">Binds 1 zinc ion per subunit.</text>
</comment>
<comment type="subcellular location">
    <subcellularLocation>
        <location evidence="1">Cytoplasm</location>
    </subcellularLocation>
</comment>
<comment type="domain">
    <text evidence="1">Consists of three domains; the N-terminal catalytic domain, the editing domain and the C-terminal C-Ala domain. The editing domain removes incorrectly charged amino acids, while the C-Ala domain, along with tRNA(Ala), serves as a bridge to cooperatively bring together the editing and aminoacylation centers thus stimulating deacylation of misacylated tRNAs.</text>
</comment>
<comment type="similarity">
    <text evidence="1">Belongs to the class-II aminoacyl-tRNA synthetase family.</text>
</comment>
<gene>
    <name evidence="1" type="primary">alaS</name>
    <name type="ordered locus">Hlac_0719</name>
</gene>
<reference key="1">
    <citation type="journal article" date="2016" name="Stand. Genomic Sci.">
        <title>Complete genome sequence of the Antarctic Halorubrum lacusprofundi type strain ACAM 34.</title>
        <authorList>
            <person name="Anderson I.J."/>
            <person name="DasSarma P."/>
            <person name="Lucas S."/>
            <person name="Copeland A."/>
            <person name="Lapidus A."/>
            <person name="Del Rio T.G."/>
            <person name="Tice H."/>
            <person name="Dalin E."/>
            <person name="Bruce D.C."/>
            <person name="Goodwin L."/>
            <person name="Pitluck S."/>
            <person name="Sims D."/>
            <person name="Brettin T.S."/>
            <person name="Detter J.C."/>
            <person name="Han C.S."/>
            <person name="Larimer F."/>
            <person name="Hauser L."/>
            <person name="Land M."/>
            <person name="Ivanova N."/>
            <person name="Richardson P."/>
            <person name="Cavicchioli R."/>
            <person name="DasSarma S."/>
            <person name="Woese C.R."/>
            <person name="Kyrpides N.C."/>
        </authorList>
    </citation>
    <scope>NUCLEOTIDE SEQUENCE [LARGE SCALE GENOMIC DNA]</scope>
    <source>
        <strain>ATCC 49239 / DSM 5036 / JCM 8891 / ACAM 34</strain>
    </source>
</reference>
<feature type="chain" id="PRO_1000198862" description="Alanine--tRNA ligase">
    <location>
        <begin position="1"/>
        <end position="926"/>
    </location>
</feature>
<feature type="region of interest" description="Disordered" evidence="2">
    <location>
        <begin position="887"/>
        <end position="910"/>
    </location>
</feature>
<feature type="compositionally biased region" description="Gly residues" evidence="2">
    <location>
        <begin position="888"/>
        <end position="904"/>
    </location>
</feature>
<feature type="binding site" evidence="1">
    <location>
        <position position="615"/>
    </location>
    <ligand>
        <name>Zn(2+)</name>
        <dbReference type="ChEBI" id="CHEBI:29105"/>
    </ligand>
</feature>
<feature type="binding site" evidence="1">
    <location>
        <position position="619"/>
    </location>
    <ligand>
        <name>Zn(2+)</name>
        <dbReference type="ChEBI" id="CHEBI:29105"/>
    </ligand>
</feature>
<feature type="binding site" evidence="1">
    <location>
        <position position="719"/>
    </location>
    <ligand>
        <name>Zn(2+)</name>
        <dbReference type="ChEBI" id="CHEBI:29105"/>
    </ligand>
</feature>
<feature type="binding site" evidence="1">
    <location>
        <position position="723"/>
    </location>
    <ligand>
        <name>Zn(2+)</name>
        <dbReference type="ChEBI" id="CHEBI:29105"/>
    </ligand>
</feature>
<organism>
    <name type="scientific">Halorubrum lacusprofundi (strain ATCC 49239 / DSM 5036 / JCM 8891 / ACAM 34)</name>
    <dbReference type="NCBI Taxonomy" id="416348"/>
    <lineage>
        <taxon>Archaea</taxon>
        <taxon>Methanobacteriati</taxon>
        <taxon>Methanobacteriota</taxon>
        <taxon>Stenosarchaea group</taxon>
        <taxon>Halobacteria</taxon>
        <taxon>Halobacteriales</taxon>
        <taxon>Haloferacaceae</taxon>
        <taxon>Halorubrum</taxon>
    </lineage>
</organism>
<sequence>MSDLEAEYRLDYFEEEGFERKECPSCGAHFWTRDADRELCGEPPCEDYSFIDDPGFPEAYSLSEMREAFLSFFEEHGHERIDPYPVAANRWRDDVLLTQASIYDFQPLVTSGQTPPPANPLTISQPCIRMQDIDNVGKTGRHTMAFEMMAHHAFNTREEVAEDEYAYHGEVYWKDETVEYCDKLFESLGADLEDITYIEDPWVGGGNAGPAIEVIYKGAELATLVFMCMERDPDGDYEMKDGHTYSFMDTYIVDTGYGLERWTWMSQGTATVYEAVYPDAIDFLKENAGIEHTEAEQKLVHRAAKLSGRLDIDDVDDVEAARGEIADRLDVDVNRLRELVEPLESIYAIADHSRTLAYMFGDGIVPSNVGTGYLARMVLRRTKRLVDEIGIDAPLDELVDMQAERLGYENRDTIREIVRTEERKYRKTLERGSRKVESLADEYAGTDEPIPTEVLLELYDSHGIQPDMVADIAAERGATVDVPDDFYALVADRHEEADGDEAAAERDDRFDDLPETEKLFYDDQGRTEFEAVVLDVFELEEGYDVVLDQTMFYPEGGGQPADRGQLTAGETTVDVVDVQERNGVVLHRTDADPGKGEFVRGQVDGDRRDRLRAHHTATHLIGHAAREVLGNHVRQAGAQKGIDSSRLDIRHFERITREQVKEIERVANALVRDDVPVRQEWPDRNEAESEHGFDLYQGGVPPGTNIRLIHVGDEDVQACAGTHVERTGEIGAVKVLKTEPVQDGVERIVFAAGGAAVEATQRTEDALYDAARALDVDPLDVPETAERFFEEWKGRGKEIESLKEELAAARASGGADAEEVEIGGVTAVIQRLDGDADELRATANAHVDDGKVAVVGSGADGSASFVVGVPDGVDVNAGQVVSELAARVGGGGGGPPDFAQGGGPDADALDDALDAAPDVLRSLQEA</sequence>
<name>SYA_HALLT</name>
<protein>
    <recommendedName>
        <fullName evidence="1">Alanine--tRNA ligase</fullName>
        <ecNumber evidence="1">6.1.1.7</ecNumber>
    </recommendedName>
    <alternativeName>
        <fullName evidence="1">Alanyl-tRNA synthetase</fullName>
        <shortName evidence="1">AlaRS</shortName>
    </alternativeName>
</protein>
<accession>B9LUG4</accession>
<keyword id="KW-0030">Aminoacyl-tRNA synthetase</keyword>
<keyword id="KW-0067">ATP-binding</keyword>
<keyword id="KW-0963">Cytoplasm</keyword>
<keyword id="KW-0436">Ligase</keyword>
<keyword id="KW-0479">Metal-binding</keyword>
<keyword id="KW-0547">Nucleotide-binding</keyword>
<keyword id="KW-0648">Protein biosynthesis</keyword>
<keyword id="KW-1185">Reference proteome</keyword>
<keyword id="KW-0694">RNA-binding</keyword>
<keyword id="KW-0820">tRNA-binding</keyword>
<keyword id="KW-0862">Zinc</keyword>